<keyword id="KW-0066">ATP synthesis</keyword>
<keyword id="KW-0067">ATP-binding</keyword>
<keyword id="KW-0997">Cell inner membrane</keyword>
<keyword id="KW-1003">Cell membrane</keyword>
<keyword id="KW-0139">CF(1)</keyword>
<keyword id="KW-0375">Hydrogen ion transport</keyword>
<keyword id="KW-0406">Ion transport</keyword>
<keyword id="KW-0472">Membrane</keyword>
<keyword id="KW-0547">Nucleotide-binding</keyword>
<keyword id="KW-1185">Reference proteome</keyword>
<keyword id="KW-1278">Translocase</keyword>
<keyword id="KW-0813">Transport</keyword>
<gene>
    <name evidence="1" type="primary">atpA2</name>
    <name type="ordered locus">Rfer_1168</name>
</gene>
<evidence type="ECO:0000255" key="1">
    <source>
        <dbReference type="HAMAP-Rule" id="MF_01346"/>
    </source>
</evidence>
<evidence type="ECO:0000256" key="2">
    <source>
        <dbReference type="SAM" id="MobiDB-lite"/>
    </source>
</evidence>
<dbReference type="EC" id="7.1.2.2" evidence="1"/>
<dbReference type="EMBL" id="CP000267">
    <property type="protein sequence ID" value="ABD68904.1"/>
    <property type="molecule type" value="Genomic_DNA"/>
</dbReference>
<dbReference type="RefSeq" id="WP_011463473.1">
    <property type="nucleotide sequence ID" value="NC_007908.1"/>
</dbReference>
<dbReference type="SMR" id="Q21Z99"/>
<dbReference type="STRING" id="338969.Rfer_1168"/>
<dbReference type="KEGG" id="rfr:Rfer_1168"/>
<dbReference type="eggNOG" id="COG0056">
    <property type="taxonomic scope" value="Bacteria"/>
</dbReference>
<dbReference type="HOGENOM" id="CLU_010091_2_1_4"/>
<dbReference type="OrthoDB" id="9803053at2"/>
<dbReference type="Proteomes" id="UP000008332">
    <property type="component" value="Chromosome"/>
</dbReference>
<dbReference type="GO" id="GO:0005886">
    <property type="term" value="C:plasma membrane"/>
    <property type="evidence" value="ECO:0007669"/>
    <property type="project" value="UniProtKB-SubCell"/>
</dbReference>
<dbReference type="GO" id="GO:0045259">
    <property type="term" value="C:proton-transporting ATP synthase complex"/>
    <property type="evidence" value="ECO:0007669"/>
    <property type="project" value="UniProtKB-KW"/>
</dbReference>
<dbReference type="GO" id="GO:0043531">
    <property type="term" value="F:ADP binding"/>
    <property type="evidence" value="ECO:0007669"/>
    <property type="project" value="TreeGrafter"/>
</dbReference>
<dbReference type="GO" id="GO:0005524">
    <property type="term" value="F:ATP binding"/>
    <property type="evidence" value="ECO:0007669"/>
    <property type="project" value="UniProtKB-UniRule"/>
</dbReference>
<dbReference type="GO" id="GO:0046933">
    <property type="term" value="F:proton-transporting ATP synthase activity, rotational mechanism"/>
    <property type="evidence" value="ECO:0007669"/>
    <property type="project" value="UniProtKB-UniRule"/>
</dbReference>
<dbReference type="CDD" id="cd18113">
    <property type="entry name" value="ATP-synt_F1_alpha_C"/>
    <property type="match status" value="1"/>
</dbReference>
<dbReference type="CDD" id="cd18116">
    <property type="entry name" value="ATP-synt_F1_alpha_N"/>
    <property type="match status" value="1"/>
</dbReference>
<dbReference type="CDD" id="cd01132">
    <property type="entry name" value="F1-ATPase_alpha_CD"/>
    <property type="match status" value="1"/>
</dbReference>
<dbReference type="FunFam" id="3.40.50.300:FF:000002">
    <property type="entry name" value="ATP synthase subunit alpha"/>
    <property type="match status" value="1"/>
</dbReference>
<dbReference type="Gene3D" id="2.40.30.20">
    <property type="match status" value="1"/>
</dbReference>
<dbReference type="Gene3D" id="1.20.150.20">
    <property type="entry name" value="ATP synthase alpha/beta chain, C-terminal domain"/>
    <property type="match status" value="1"/>
</dbReference>
<dbReference type="Gene3D" id="3.40.50.300">
    <property type="entry name" value="P-loop containing nucleotide triphosphate hydrolases"/>
    <property type="match status" value="1"/>
</dbReference>
<dbReference type="HAMAP" id="MF_01346">
    <property type="entry name" value="ATP_synth_alpha_bact"/>
    <property type="match status" value="1"/>
</dbReference>
<dbReference type="InterPro" id="IPR017710">
    <property type="entry name" value="Alt_ATP_synth_F1_asu"/>
</dbReference>
<dbReference type="InterPro" id="IPR023366">
    <property type="entry name" value="ATP_synth_asu-like_sf"/>
</dbReference>
<dbReference type="InterPro" id="IPR000793">
    <property type="entry name" value="ATP_synth_asu_C"/>
</dbReference>
<dbReference type="InterPro" id="IPR038376">
    <property type="entry name" value="ATP_synth_asu_C_sf"/>
</dbReference>
<dbReference type="InterPro" id="IPR033732">
    <property type="entry name" value="ATP_synth_F1_a_nt-bd_dom"/>
</dbReference>
<dbReference type="InterPro" id="IPR005294">
    <property type="entry name" value="ATP_synth_F1_asu"/>
</dbReference>
<dbReference type="InterPro" id="IPR020003">
    <property type="entry name" value="ATPase_a/bsu_AS"/>
</dbReference>
<dbReference type="InterPro" id="IPR004100">
    <property type="entry name" value="ATPase_F1/V1/A1_a/bsu_N"/>
</dbReference>
<dbReference type="InterPro" id="IPR036121">
    <property type="entry name" value="ATPase_F1/V1/A1_a/bsu_N_sf"/>
</dbReference>
<dbReference type="InterPro" id="IPR000194">
    <property type="entry name" value="ATPase_F1/V1/A1_a/bsu_nucl-bd"/>
</dbReference>
<dbReference type="InterPro" id="IPR027417">
    <property type="entry name" value="P-loop_NTPase"/>
</dbReference>
<dbReference type="NCBIfam" id="TIGR03324">
    <property type="entry name" value="alt_F1F0_F1_al"/>
    <property type="match status" value="1"/>
</dbReference>
<dbReference type="NCBIfam" id="TIGR00962">
    <property type="entry name" value="atpA"/>
    <property type="match status" value="1"/>
</dbReference>
<dbReference type="NCBIfam" id="NF009884">
    <property type="entry name" value="PRK13343.1"/>
    <property type="match status" value="1"/>
</dbReference>
<dbReference type="PANTHER" id="PTHR48082">
    <property type="entry name" value="ATP SYNTHASE SUBUNIT ALPHA, MITOCHONDRIAL"/>
    <property type="match status" value="1"/>
</dbReference>
<dbReference type="PANTHER" id="PTHR48082:SF2">
    <property type="entry name" value="ATP SYNTHASE SUBUNIT ALPHA, MITOCHONDRIAL"/>
    <property type="match status" value="1"/>
</dbReference>
<dbReference type="Pfam" id="PF00006">
    <property type="entry name" value="ATP-synt_ab"/>
    <property type="match status" value="1"/>
</dbReference>
<dbReference type="Pfam" id="PF00306">
    <property type="entry name" value="ATP-synt_ab_C"/>
    <property type="match status" value="1"/>
</dbReference>
<dbReference type="Pfam" id="PF02874">
    <property type="entry name" value="ATP-synt_ab_N"/>
    <property type="match status" value="1"/>
</dbReference>
<dbReference type="SUPFAM" id="SSF47917">
    <property type="entry name" value="C-terminal domain of alpha and beta subunits of F1 ATP synthase"/>
    <property type="match status" value="1"/>
</dbReference>
<dbReference type="SUPFAM" id="SSF50615">
    <property type="entry name" value="N-terminal domain of alpha and beta subunits of F1 ATP synthase"/>
    <property type="match status" value="1"/>
</dbReference>
<dbReference type="SUPFAM" id="SSF52540">
    <property type="entry name" value="P-loop containing nucleoside triphosphate hydrolases"/>
    <property type="match status" value="1"/>
</dbReference>
<dbReference type="PROSITE" id="PS00152">
    <property type="entry name" value="ATPASE_ALPHA_BETA"/>
    <property type="match status" value="1"/>
</dbReference>
<name>ATPA2_ALBFT</name>
<accession>Q21Z99</accession>
<reference key="1">
    <citation type="submission" date="2006-02" db="EMBL/GenBank/DDBJ databases">
        <title>Complete sequence of chromosome of Rhodoferax ferrireducens DSM 15236.</title>
        <authorList>
            <person name="Copeland A."/>
            <person name="Lucas S."/>
            <person name="Lapidus A."/>
            <person name="Barry K."/>
            <person name="Detter J.C."/>
            <person name="Glavina del Rio T."/>
            <person name="Hammon N."/>
            <person name="Israni S."/>
            <person name="Pitluck S."/>
            <person name="Brettin T."/>
            <person name="Bruce D."/>
            <person name="Han C."/>
            <person name="Tapia R."/>
            <person name="Gilna P."/>
            <person name="Kiss H."/>
            <person name="Schmutz J."/>
            <person name="Larimer F."/>
            <person name="Land M."/>
            <person name="Kyrpides N."/>
            <person name="Ivanova N."/>
            <person name="Richardson P."/>
        </authorList>
    </citation>
    <scope>NUCLEOTIDE SEQUENCE [LARGE SCALE GENOMIC DNA]</scope>
    <source>
        <strain>ATCC BAA-621 / DSM 15236 / T118</strain>
    </source>
</reference>
<feature type="chain" id="PRO_0000256106" description="ATP synthase subunit alpha 2">
    <location>
        <begin position="1"/>
        <end position="534"/>
    </location>
</feature>
<feature type="region of interest" description="Disordered" evidence="2">
    <location>
        <begin position="506"/>
        <end position="534"/>
    </location>
</feature>
<feature type="compositionally biased region" description="Basic and acidic residues" evidence="2">
    <location>
        <begin position="514"/>
        <end position="524"/>
    </location>
</feature>
<feature type="binding site" evidence="1">
    <location>
        <begin position="175"/>
        <end position="182"/>
    </location>
    <ligand>
        <name>ATP</name>
        <dbReference type="ChEBI" id="CHEBI:30616"/>
    </ligand>
</feature>
<feature type="site" description="Required for activity" evidence="1">
    <location>
        <position position="368"/>
    </location>
</feature>
<organism>
    <name type="scientific">Albidiferax ferrireducens (strain ATCC BAA-621 / DSM 15236 / T118)</name>
    <name type="common">Rhodoferax ferrireducens</name>
    <dbReference type="NCBI Taxonomy" id="338969"/>
    <lineage>
        <taxon>Bacteria</taxon>
        <taxon>Pseudomonadati</taxon>
        <taxon>Pseudomonadota</taxon>
        <taxon>Betaproteobacteria</taxon>
        <taxon>Burkholderiales</taxon>
        <taxon>Comamonadaceae</taxon>
        <taxon>Rhodoferax</taxon>
    </lineage>
</organism>
<protein>
    <recommendedName>
        <fullName evidence="1">ATP synthase subunit alpha 2</fullName>
        <ecNumber evidence="1">7.1.2.2</ecNumber>
    </recommendedName>
    <alternativeName>
        <fullName evidence="1">ATP synthase F1 sector subunit alpha 2</fullName>
    </alternativeName>
    <alternativeName>
        <fullName evidence="1">F-ATPase subunit alpha 2</fullName>
    </alternativeName>
</protein>
<proteinExistence type="inferred from homology"/>
<comment type="function">
    <text evidence="1">Produces ATP from ADP in the presence of a proton gradient across the membrane. The alpha chain is a regulatory subunit.</text>
</comment>
<comment type="catalytic activity">
    <reaction evidence="1">
        <text>ATP + H2O + 4 H(+)(in) = ADP + phosphate + 5 H(+)(out)</text>
        <dbReference type="Rhea" id="RHEA:57720"/>
        <dbReference type="ChEBI" id="CHEBI:15377"/>
        <dbReference type="ChEBI" id="CHEBI:15378"/>
        <dbReference type="ChEBI" id="CHEBI:30616"/>
        <dbReference type="ChEBI" id="CHEBI:43474"/>
        <dbReference type="ChEBI" id="CHEBI:456216"/>
        <dbReference type="EC" id="7.1.2.2"/>
    </reaction>
</comment>
<comment type="subunit">
    <text evidence="1">F-type ATPases have 2 components, CF(1) - the catalytic core - and CF(0) - the membrane proton channel. CF(1) has five subunits: alpha(3), beta(3), gamma(1), delta(1), epsilon(1). CF(0) has three main subunits: a(1), b(2) and c(9-12). The alpha and beta chains form an alternating ring which encloses part of the gamma chain. CF(1) is attached to CF(0) by a central stalk formed by the gamma and epsilon chains, while a peripheral stalk is formed by the delta and b chains.</text>
</comment>
<comment type="subcellular location">
    <subcellularLocation>
        <location evidence="1">Cell inner membrane</location>
        <topology evidence="1">Peripheral membrane protein</topology>
    </subcellularLocation>
</comment>
<comment type="similarity">
    <text evidence="1">Belongs to the ATPase alpha/beta chains family.</text>
</comment>
<sequence length="534" mass="57334">MEPAEDLQKVFDKAFAGMREAREAFAPSLAPREVGTITSIATGIAKVSGLPGVGFDELVKFPGDLFGIAFNVDEAEIGVVLLGEYWHLHAGDEVDRTGRVMDVAVGDGLLGRVIDPLGRPLDGRGPVASSHRLPIERPASPIMDRAPVTVPLQTGLKVIDALIPVGRGQRELILGDRQTGKTAIAIDTILNQQGQNVLCVYCAIGQRASAVAKVVATLREKGAMDFTTVVVTEGNDPPGLAYIAPYAATSIAEHFMEAGRDVLIVYDDLTQHARAYRELSLLLRRPPGREAFPGDIFYIHSRLLERATHLRQERGGGSLTALPIIETQAQNISAYIPTNLISITDGQIYLSPSLFELGVLPAVDVGKSVSRVGGKAQRTAYRAVAGDLKLAYAQFEELETFARFGARLDENTTKIIEHGRRIRACLKQPESAPVSVAAQIAVLLALSAELFDGVELNQMTEAEQAVRAAAADMPAEVRARFDSADKLSDEDREAIIQIARVALASFQPAPEPETAPKTKTDIKPKPKAAGGESS</sequence>